<feature type="chain" id="PRO_0000437942" description="T-cell-specific guanine nucleotide triphosphate-binding protein 1">
    <location>
        <begin position="1"/>
        <end position="415"/>
    </location>
</feature>
<feature type="domain" description="IRG-type G" evidence="2">
    <location>
        <begin position="55"/>
        <end position="237"/>
    </location>
</feature>
<feature type="binding site" evidence="1">
    <location>
        <position position="66"/>
    </location>
    <ligand>
        <name>GDP</name>
        <dbReference type="ChEBI" id="CHEBI:58189"/>
    </ligand>
</feature>
<feature type="binding site" evidence="1">
    <location>
        <position position="68"/>
    </location>
    <ligand>
        <name>GDP</name>
        <dbReference type="ChEBI" id="CHEBI:58189"/>
    </ligand>
</feature>
<feature type="binding site" evidence="1">
    <location>
        <position position="69"/>
    </location>
    <ligand>
        <name>GDP</name>
        <dbReference type="ChEBI" id="CHEBI:58189"/>
    </ligand>
</feature>
<feature type="binding site" evidence="1">
    <location>
        <position position="70"/>
    </location>
    <ligand>
        <name>GDP</name>
        <dbReference type="ChEBI" id="CHEBI:58189"/>
    </ligand>
</feature>
<feature type="binding site" evidence="1">
    <location>
        <position position="90"/>
    </location>
    <ligand>
        <name>GDP</name>
        <dbReference type="ChEBI" id="CHEBI:58189"/>
    </ligand>
</feature>
<feature type="binding site" evidence="1">
    <location>
        <position position="171"/>
    </location>
    <ligand>
        <name>GDP</name>
        <dbReference type="ChEBI" id="CHEBI:58189"/>
    </ligand>
</feature>
<feature type="binding site" evidence="1">
    <location>
        <position position="173"/>
    </location>
    <ligand>
        <name>GDP</name>
        <dbReference type="ChEBI" id="CHEBI:58189"/>
    </ligand>
</feature>
<feature type="binding site" evidence="1">
    <location>
        <position position="219"/>
    </location>
    <ligand>
        <name>GDP</name>
        <dbReference type="ChEBI" id="CHEBI:58189"/>
    </ligand>
</feature>
<feature type="modified residue" description="(Microbial infection) Phosphothreonine; by ROP17" evidence="6 11">
    <location>
        <position position="89"/>
    </location>
</feature>
<feature type="sequence conflict" description="In Ref. 1; AAA66220." evidence="17" ref="1">
    <original>A</original>
    <variation>G</variation>
    <location>
        <position position="91"/>
    </location>
</feature>
<feature type="sequence conflict" description="In Ref. 2; BAC40974." evidence="17" ref="2">
    <original>E</original>
    <variation>G</variation>
    <location>
        <position position="272"/>
    </location>
</feature>
<keyword id="KW-0963">Cytoplasm</keyword>
<keyword id="KW-0256">Endoplasmic reticulum</keyword>
<keyword id="KW-0333">Golgi apparatus</keyword>
<keyword id="KW-0342">GTP-binding</keyword>
<keyword id="KW-0378">Hydrolase</keyword>
<keyword id="KW-0391">Immunity</keyword>
<keyword id="KW-0399">Innate immunity</keyword>
<keyword id="KW-0472">Membrane</keyword>
<keyword id="KW-0547">Nucleotide-binding</keyword>
<keyword id="KW-0597">Phosphoprotein</keyword>
<keyword id="KW-1185">Reference proteome</keyword>
<protein>
    <recommendedName>
        <fullName>T-cell-specific guanine nucleotide triphosphate-binding protein 1</fullName>
        <ecNumber evidence="14">3.6.5.-</ecNumber>
    </recommendedName>
    <alternativeName>
        <fullName evidence="15">Interferon-gamma-inducible GTPase Ifggb5</fullName>
    </alternativeName>
</protein>
<gene>
    <name type="primary">Tgtp1</name>
    <name evidence="15" type="synonym">Ifggb5</name>
    <name evidence="15" type="synonym">Irgb6</name>
    <name evidence="16" type="synonym">Mg21</name>
</gene>
<dbReference type="EC" id="3.6.5.-" evidence="14"/>
<dbReference type="EMBL" id="U15636">
    <property type="protein sequence ID" value="AAA66220.1"/>
    <property type="molecule type" value="mRNA"/>
</dbReference>
<dbReference type="EMBL" id="AK089836">
    <property type="protein sequence ID" value="BAC40974.1"/>
    <property type="molecule type" value="mRNA"/>
</dbReference>
<dbReference type="EMBL" id="AK163978">
    <property type="protein sequence ID" value="BAE37565.1"/>
    <property type="molecule type" value="mRNA"/>
</dbReference>
<dbReference type="EMBL" id="AK172473">
    <property type="protein sequence ID" value="BAE43026.1"/>
    <property type="molecule type" value="mRNA"/>
</dbReference>
<dbReference type="EMBL" id="AL627237">
    <property type="status" value="NOT_ANNOTATED_CDS"/>
    <property type="molecule type" value="Genomic_DNA"/>
</dbReference>
<dbReference type="EMBL" id="CH466575">
    <property type="protein sequence ID" value="EDL33781.1"/>
    <property type="molecule type" value="Genomic_DNA"/>
</dbReference>
<dbReference type="EMBL" id="BC085259">
    <property type="protein sequence ID" value="AAH85259.1"/>
    <property type="molecule type" value="mRNA"/>
</dbReference>
<dbReference type="EMBL" id="FR734025">
    <property type="protein sequence ID" value="CBY65988.1"/>
    <property type="molecule type" value="Genomic_DNA"/>
</dbReference>
<dbReference type="CCDS" id="CCDS24593.1"/>
<dbReference type="PIR" id="I56251">
    <property type="entry name" value="I56251"/>
</dbReference>
<dbReference type="RefSeq" id="NP_035709.3">
    <property type="nucleotide sequence ID" value="NM_011579.3"/>
</dbReference>
<dbReference type="SMR" id="Q62293"/>
<dbReference type="FunCoup" id="Q62293">
    <property type="interactions" value="97"/>
</dbReference>
<dbReference type="IntAct" id="Q62293">
    <property type="interactions" value="1"/>
</dbReference>
<dbReference type="STRING" id="10090.ENSMUSP00000045025"/>
<dbReference type="GlyGen" id="Q62293">
    <property type="glycosylation" value="1 site"/>
</dbReference>
<dbReference type="iPTMnet" id="Q62293"/>
<dbReference type="PhosphoSitePlus" id="Q62293"/>
<dbReference type="PaxDb" id="10090-ENSMUSP00000045025"/>
<dbReference type="Pumba" id="Q62293"/>
<dbReference type="DNASU" id="21822"/>
<dbReference type="Ensembl" id="ENSMUST00000046745.7">
    <property type="protein sequence ID" value="ENSMUSP00000045025.7"/>
    <property type="gene ID" value="ENSMUSG00000078921.4"/>
</dbReference>
<dbReference type="Ensembl" id="ENSMUST00000068063.4">
    <property type="protein sequence ID" value="ENSMUSP00000069914.4"/>
    <property type="gene ID" value="ENSMUSG00000078922.10"/>
</dbReference>
<dbReference type="GeneID" id="21822"/>
<dbReference type="KEGG" id="mmu:100039796"/>
<dbReference type="KEGG" id="mmu:21822"/>
<dbReference type="UCSC" id="uc007ipm.3">
    <property type="organism name" value="mouse"/>
</dbReference>
<dbReference type="AGR" id="MGI:98734"/>
<dbReference type="CTD" id="100039796"/>
<dbReference type="CTD" id="21822"/>
<dbReference type="MGI" id="MGI:98734">
    <property type="gene designation" value="Tgtp1"/>
</dbReference>
<dbReference type="VEuPathDB" id="HostDB:ENSMUSG00000078921"/>
<dbReference type="VEuPathDB" id="HostDB:ENSMUSG00000078922"/>
<dbReference type="eggNOG" id="ENOG502S70P">
    <property type="taxonomic scope" value="Eukaryota"/>
</dbReference>
<dbReference type="GeneTree" id="ENSGT00950000183007"/>
<dbReference type="HOGENOM" id="CLU_015342_2_0_1"/>
<dbReference type="InParanoid" id="Q62293"/>
<dbReference type="OMA" id="LMANLKC"/>
<dbReference type="OrthoDB" id="422720at2759"/>
<dbReference type="PhylomeDB" id="Q62293"/>
<dbReference type="TreeFam" id="TF331897"/>
<dbReference type="BioGRID-ORCS" id="100039796">
    <property type="hits" value="1 hit in 42 CRISPR screens"/>
</dbReference>
<dbReference type="BioGRID-ORCS" id="21822">
    <property type="hits" value="4 hits in 44 CRISPR screens"/>
</dbReference>
<dbReference type="ChiTaRS" id="Tgtp1">
    <property type="organism name" value="mouse"/>
</dbReference>
<dbReference type="PRO" id="PR:Q62293"/>
<dbReference type="Proteomes" id="UP000000589">
    <property type="component" value="Chromosome 11"/>
</dbReference>
<dbReference type="RNAct" id="Q62293">
    <property type="molecule type" value="protein"/>
</dbReference>
<dbReference type="Bgee" id="ENSMUSG00000078921">
    <property type="expression patterns" value="Expressed in thymus and 71 other cell types or tissues"/>
</dbReference>
<dbReference type="ExpressionAtlas" id="Q62293">
    <property type="expression patterns" value="baseline and differential"/>
</dbReference>
<dbReference type="GO" id="GO:0005783">
    <property type="term" value="C:endoplasmic reticulum"/>
    <property type="evidence" value="ECO:0007669"/>
    <property type="project" value="UniProtKB-SubCell"/>
</dbReference>
<dbReference type="GO" id="GO:0005794">
    <property type="term" value="C:Golgi apparatus"/>
    <property type="evidence" value="ECO:0007669"/>
    <property type="project" value="UniProtKB-SubCell"/>
</dbReference>
<dbReference type="GO" id="GO:0016020">
    <property type="term" value="C:membrane"/>
    <property type="evidence" value="ECO:0007669"/>
    <property type="project" value="InterPro"/>
</dbReference>
<dbReference type="GO" id="GO:0005525">
    <property type="term" value="F:GTP binding"/>
    <property type="evidence" value="ECO:0007669"/>
    <property type="project" value="UniProtKB-KW"/>
</dbReference>
<dbReference type="GO" id="GO:0003924">
    <property type="term" value="F:GTPase activity"/>
    <property type="evidence" value="ECO:0000314"/>
    <property type="project" value="UniProtKB"/>
</dbReference>
<dbReference type="GO" id="GO:0035458">
    <property type="term" value="P:cellular response to interferon-beta"/>
    <property type="evidence" value="ECO:0000314"/>
    <property type="project" value="MGI"/>
</dbReference>
<dbReference type="GO" id="GO:0042832">
    <property type="term" value="P:defense response to protozoan"/>
    <property type="evidence" value="ECO:0000314"/>
    <property type="project" value="UniProtKB"/>
</dbReference>
<dbReference type="GO" id="GO:0006955">
    <property type="term" value="P:immune response"/>
    <property type="evidence" value="ECO:0000303"/>
    <property type="project" value="UniProtKB"/>
</dbReference>
<dbReference type="GO" id="GO:0009617">
    <property type="term" value="P:response to bacterium"/>
    <property type="evidence" value="ECO:0000270"/>
    <property type="project" value="MGI"/>
</dbReference>
<dbReference type="GO" id="GO:0035455">
    <property type="term" value="P:response to interferon-alpha"/>
    <property type="evidence" value="ECO:0000314"/>
    <property type="project" value="MGI"/>
</dbReference>
<dbReference type="GO" id="GO:0034341">
    <property type="term" value="P:response to type II interferon"/>
    <property type="evidence" value="ECO:0000314"/>
    <property type="project" value="MGI"/>
</dbReference>
<dbReference type="GO" id="GO:0009615">
    <property type="term" value="P:response to virus"/>
    <property type="evidence" value="ECO:0000314"/>
    <property type="project" value="UniProtKB"/>
</dbReference>
<dbReference type="CDD" id="cd04104">
    <property type="entry name" value="p47_IIGP_like"/>
    <property type="match status" value="1"/>
</dbReference>
<dbReference type="FunFam" id="3.40.50.300:FF:000541">
    <property type="entry name" value="Immunity related GTPase M"/>
    <property type="match status" value="1"/>
</dbReference>
<dbReference type="Gene3D" id="3.40.50.300">
    <property type="entry name" value="P-loop containing nucleotide triphosphate hydrolases"/>
    <property type="match status" value="1"/>
</dbReference>
<dbReference type="InterPro" id="IPR030385">
    <property type="entry name" value="G_IRG_dom"/>
</dbReference>
<dbReference type="InterPro" id="IPR007743">
    <property type="entry name" value="Immunity-related_GTPase-like"/>
</dbReference>
<dbReference type="InterPro" id="IPR051515">
    <property type="entry name" value="IRG"/>
</dbReference>
<dbReference type="InterPro" id="IPR027417">
    <property type="entry name" value="P-loop_NTPase"/>
</dbReference>
<dbReference type="PANTHER" id="PTHR32341:SF15">
    <property type="entry name" value="INTERFERON-GAMMA-INDUCIBLE GTPASE 10-RELATED"/>
    <property type="match status" value="1"/>
</dbReference>
<dbReference type="PANTHER" id="PTHR32341">
    <property type="entry name" value="INTERFERON-INDUCIBLE GTPASE"/>
    <property type="match status" value="1"/>
</dbReference>
<dbReference type="Pfam" id="PF05049">
    <property type="entry name" value="IIGP"/>
    <property type="match status" value="1"/>
</dbReference>
<dbReference type="SUPFAM" id="SSF52540">
    <property type="entry name" value="P-loop containing nucleoside triphosphate hydrolases"/>
    <property type="match status" value="1"/>
</dbReference>
<dbReference type="PROSITE" id="PS51716">
    <property type="entry name" value="G_IRG"/>
    <property type="match status" value="1"/>
</dbReference>
<reference key="1">
    <citation type="journal article" date="1995" name="J. Leukoc. Biol.">
        <title>Cloning and characterization of a novel cDNA that is IFN-gamma-induced in mouse peritoneal macrophages and encodes a putative GTP-binding protein.</title>
        <authorList>
            <person name="Lafuse W.P."/>
            <person name="Brown D."/>
            <person name="Castle L."/>
            <person name="Zwilling B.S."/>
        </authorList>
    </citation>
    <scope>NUCLEOTIDE SEQUENCE [MRNA]</scope>
    <scope>INDUCTION BY IFNG</scope>
    <scope>TISSUE SPECIFICITY</scope>
    <source>
        <strain>BALB/cJ</strain>
        <tissue>Peritoneal macrophage</tissue>
    </source>
</reference>
<reference key="2">
    <citation type="journal article" date="2005" name="Science">
        <title>The transcriptional landscape of the mammalian genome.</title>
        <authorList>
            <person name="Carninci P."/>
            <person name="Kasukawa T."/>
            <person name="Katayama S."/>
            <person name="Gough J."/>
            <person name="Frith M.C."/>
            <person name="Maeda N."/>
            <person name="Oyama R."/>
            <person name="Ravasi T."/>
            <person name="Lenhard B."/>
            <person name="Wells C."/>
            <person name="Kodzius R."/>
            <person name="Shimokawa K."/>
            <person name="Bajic V.B."/>
            <person name="Brenner S.E."/>
            <person name="Batalov S."/>
            <person name="Forrest A.R."/>
            <person name="Zavolan M."/>
            <person name="Davis M.J."/>
            <person name="Wilming L.G."/>
            <person name="Aidinis V."/>
            <person name="Allen J.E."/>
            <person name="Ambesi-Impiombato A."/>
            <person name="Apweiler R."/>
            <person name="Aturaliya R.N."/>
            <person name="Bailey T.L."/>
            <person name="Bansal M."/>
            <person name="Baxter L."/>
            <person name="Beisel K.W."/>
            <person name="Bersano T."/>
            <person name="Bono H."/>
            <person name="Chalk A.M."/>
            <person name="Chiu K.P."/>
            <person name="Choudhary V."/>
            <person name="Christoffels A."/>
            <person name="Clutterbuck D.R."/>
            <person name="Crowe M.L."/>
            <person name="Dalla E."/>
            <person name="Dalrymple B.P."/>
            <person name="de Bono B."/>
            <person name="Della Gatta G."/>
            <person name="di Bernardo D."/>
            <person name="Down T."/>
            <person name="Engstrom P."/>
            <person name="Fagiolini M."/>
            <person name="Faulkner G."/>
            <person name="Fletcher C.F."/>
            <person name="Fukushima T."/>
            <person name="Furuno M."/>
            <person name="Futaki S."/>
            <person name="Gariboldi M."/>
            <person name="Georgii-Hemming P."/>
            <person name="Gingeras T.R."/>
            <person name="Gojobori T."/>
            <person name="Green R.E."/>
            <person name="Gustincich S."/>
            <person name="Harbers M."/>
            <person name="Hayashi Y."/>
            <person name="Hensch T.K."/>
            <person name="Hirokawa N."/>
            <person name="Hill D."/>
            <person name="Huminiecki L."/>
            <person name="Iacono M."/>
            <person name="Ikeo K."/>
            <person name="Iwama A."/>
            <person name="Ishikawa T."/>
            <person name="Jakt M."/>
            <person name="Kanapin A."/>
            <person name="Katoh M."/>
            <person name="Kawasawa Y."/>
            <person name="Kelso J."/>
            <person name="Kitamura H."/>
            <person name="Kitano H."/>
            <person name="Kollias G."/>
            <person name="Krishnan S.P."/>
            <person name="Kruger A."/>
            <person name="Kummerfeld S.K."/>
            <person name="Kurochkin I.V."/>
            <person name="Lareau L.F."/>
            <person name="Lazarevic D."/>
            <person name="Lipovich L."/>
            <person name="Liu J."/>
            <person name="Liuni S."/>
            <person name="McWilliam S."/>
            <person name="Madan Babu M."/>
            <person name="Madera M."/>
            <person name="Marchionni L."/>
            <person name="Matsuda H."/>
            <person name="Matsuzawa S."/>
            <person name="Miki H."/>
            <person name="Mignone F."/>
            <person name="Miyake S."/>
            <person name="Morris K."/>
            <person name="Mottagui-Tabar S."/>
            <person name="Mulder N."/>
            <person name="Nakano N."/>
            <person name="Nakauchi H."/>
            <person name="Ng P."/>
            <person name="Nilsson R."/>
            <person name="Nishiguchi S."/>
            <person name="Nishikawa S."/>
            <person name="Nori F."/>
            <person name="Ohara O."/>
            <person name="Okazaki Y."/>
            <person name="Orlando V."/>
            <person name="Pang K.C."/>
            <person name="Pavan W.J."/>
            <person name="Pavesi G."/>
            <person name="Pesole G."/>
            <person name="Petrovsky N."/>
            <person name="Piazza S."/>
            <person name="Reed J."/>
            <person name="Reid J.F."/>
            <person name="Ring B.Z."/>
            <person name="Ringwald M."/>
            <person name="Rost B."/>
            <person name="Ruan Y."/>
            <person name="Salzberg S.L."/>
            <person name="Sandelin A."/>
            <person name="Schneider C."/>
            <person name="Schoenbach C."/>
            <person name="Sekiguchi K."/>
            <person name="Semple C.A."/>
            <person name="Seno S."/>
            <person name="Sessa L."/>
            <person name="Sheng Y."/>
            <person name="Shibata Y."/>
            <person name="Shimada H."/>
            <person name="Shimada K."/>
            <person name="Silva D."/>
            <person name="Sinclair B."/>
            <person name="Sperling S."/>
            <person name="Stupka E."/>
            <person name="Sugiura K."/>
            <person name="Sultana R."/>
            <person name="Takenaka Y."/>
            <person name="Taki K."/>
            <person name="Tammoja K."/>
            <person name="Tan S.L."/>
            <person name="Tang S."/>
            <person name="Taylor M.S."/>
            <person name="Tegner J."/>
            <person name="Teichmann S.A."/>
            <person name="Ueda H.R."/>
            <person name="van Nimwegen E."/>
            <person name="Verardo R."/>
            <person name="Wei C.L."/>
            <person name="Yagi K."/>
            <person name="Yamanishi H."/>
            <person name="Zabarovsky E."/>
            <person name="Zhu S."/>
            <person name="Zimmer A."/>
            <person name="Hide W."/>
            <person name="Bult C."/>
            <person name="Grimmond S.M."/>
            <person name="Teasdale R.D."/>
            <person name="Liu E.T."/>
            <person name="Brusic V."/>
            <person name="Quackenbush J."/>
            <person name="Wahlestedt C."/>
            <person name="Mattick J.S."/>
            <person name="Hume D.A."/>
            <person name="Kai C."/>
            <person name="Sasaki D."/>
            <person name="Tomaru Y."/>
            <person name="Fukuda S."/>
            <person name="Kanamori-Katayama M."/>
            <person name="Suzuki M."/>
            <person name="Aoki J."/>
            <person name="Arakawa T."/>
            <person name="Iida J."/>
            <person name="Imamura K."/>
            <person name="Itoh M."/>
            <person name="Kato T."/>
            <person name="Kawaji H."/>
            <person name="Kawagashira N."/>
            <person name="Kawashima T."/>
            <person name="Kojima M."/>
            <person name="Kondo S."/>
            <person name="Konno H."/>
            <person name="Nakano K."/>
            <person name="Ninomiya N."/>
            <person name="Nishio T."/>
            <person name="Okada M."/>
            <person name="Plessy C."/>
            <person name="Shibata K."/>
            <person name="Shiraki T."/>
            <person name="Suzuki S."/>
            <person name="Tagami M."/>
            <person name="Waki K."/>
            <person name="Watahiki A."/>
            <person name="Okamura-Oho Y."/>
            <person name="Suzuki H."/>
            <person name="Kawai J."/>
            <person name="Hayashizaki Y."/>
        </authorList>
    </citation>
    <scope>NUCLEOTIDE SEQUENCE [LARGE SCALE MRNA]</scope>
    <source>
        <strain>C57BL/6J</strain>
        <strain>NOD</strain>
        <tissue>Embryonic stem cell</tissue>
        <tissue>Spleen</tissue>
    </source>
</reference>
<reference key="3">
    <citation type="journal article" date="2009" name="PLoS Biol.">
        <title>Lineage-specific biology revealed by a finished genome assembly of the mouse.</title>
        <authorList>
            <person name="Church D.M."/>
            <person name="Goodstadt L."/>
            <person name="Hillier L.W."/>
            <person name="Zody M.C."/>
            <person name="Goldstein S."/>
            <person name="She X."/>
            <person name="Bult C.J."/>
            <person name="Agarwala R."/>
            <person name="Cherry J.L."/>
            <person name="DiCuccio M."/>
            <person name="Hlavina W."/>
            <person name="Kapustin Y."/>
            <person name="Meric P."/>
            <person name="Maglott D."/>
            <person name="Birtle Z."/>
            <person name="Marques A.C."/>
            <person name="Graves T."/>
            <person name="Zhou S."/>
            <person name="Teague B."/>
            <person name="Potamousis K."/>
            <person name="Churas C."/>
            <person name="Place M."/>
            <person name="Herschleb J."/>
            <person name="Runnheim R."/>
            <person name="Forrest D."/>
            <person name="Amos-Landgraf J."/>
            <person name="Schwartz D.C."/>
            <person name="Cheng Z."/>
            <person name="Lindblad-Toh K."/>
            <person name="Eichler E.E."/>
            <person name="Ponting C.P."/>
        </authorList>
    </citation>
    <scope>NUCLEOTIDE SEQUENCE [LARGE SCALE GENOMIC DNA]</scope>
    <source>
        <strain>C57BL/6J</strain>
    </source>
</reference>
<reference key="4">
    <citation type="submission" date="2005-09" db="EMBL/GenBank/DDBJ databases">
        <authorList>
            <person name="Mural R.J."/>
            <person name="Adams M.D."/>
            <person name="Myers E.W."/>
            <person name="Smith H.O."/>
            <person name="Venter J.C."/>
        </authorList>
    </citation>
    <scope>NUCLEOTIDE SEQUENCE [LARGE SCALE GENOMIC DNA]</scope>
</reference>
<reference key="5">
    <citation type="journal article" date="2004" name="Genome Res.">
        <title>The status, quality, and expansion of the NIH full-length cDNA project: the Mammalian Gene Collection (MGC).</title>
        <authorList>
            <consortium name="The MGC Project Team"/>
        </authorList>
    </citation>
    <scope>NUCLEOTIDE SEQUENCE [LARGE SCALE MRNA]</scope>
    <source>
        <strain>NMRI</strain>
        <tissue>Mammary gland</tissue>
    </source>
</reference>
<reference key="6">
    <citation type="journal article" date="1995" name="J. Immunol.">
        <title>Isolation of a gene encoding a developmentally regulated T cell-specific protein with a guanine nucleotide triphosphate-binding motif.</title>
        <authorList>
            <person name="Carlow D.A."/>
            <person name="Marth J."/>
            <person name="Clark-Lewis I."/>
            <person name="Teh H.S."/>
        </authorList>
    </citation>
    <scope>TISSUE SPECIFICITY</scope>
</reference>
<reference key="7">
    <citation type="journal article" date="1998" name="J. Immunol.">
        <title>Specific antiviral activity demonstrated by TGTP, a member of a new family of interferon-induced GTPases.</title>
        <authorList>
            <person name="Carlow D.A."/>
            <person name="Teh S.J."/>
            <person name="Teh H.S."/>
        </authorList>
    </citation>
    <scope>FUNCTION</scope>
    <scope>INDUCTION BY IFNG</scope>
    <scope>CATALYTIC ACTIVITY</scope>
</reference>
<reference key="8">
    <citation type="journal article" date="2005" name="Genome Biol.">
        <title>The interferon-inducible p47 (IRG) GTPases in vertebrates: loss of the cell autonomous resistance mechanism in the human lineage.</title>
        <authorList>
            <person name="Bekpen C."/>
            <person name="Hunn J.P."/>
            <person name="Rohde C."/>
            <person name="Parvanova I."/>
            <person name="Guethlein L."/>
            <person name="Dunn D.M."/>
            <person name="Glowalla E."/>
            <person name="Leptin M."/>
            <person name="Howard J.C."/>
        </authorList>
    </citation>
    <scope>GENOMIC ORGANIZATION OF P47 GTPASE CLUSTER</scope>
</reference>
<reference key="9">
    <citation type="journal article" date="2009" name="Biochem. Biophys. Res. Commun.">
        <title>Upregulation of immunity-related GTPase (IRG) proteins by TNF-alpha in murine astrocytes.</title>
        <authorList>
            <person name="Yamada K."/>
            <person name="Akimoto H."/>
            <person name="Ogawa Y."/>
            <person name="Kinumi T."/>
            <person name="Kamagata Y."/>
            <person name="Ohmiya Y."/>
        </authorList>
    </citation>
    <scope>IDENTIFICATION BY MASS SPECTROMETRY</scope>
    <scope>SUBCELLULAR LOCATION</scope>
    <scope>INDUCTION BY TNF</scope>
    <scope>TISSUE SPECIFICITY</scope>
</reference>
<reference key="10">
    <citation type="journal article" date="2009" name="J. Immunol.">
        <title>Virulent Toxoplasma gondii evade immunity-related GTPase-mediated parasite vacuole disruption within primed macrophages.</title>
        <authorList>
            <person name="Zhao Y."/>
            <person name="Ferguson D.J."/>
            <person name="Wilson D.C."/>
            <person name="Howard J.C."/>
            <person name="Sibley L.D."/>
            <person name="Yap G.S."/>
        </authorList>
    </citation>
    <scope>FUNCTION</scope>
</reference>
<reference key="11">
    <citation type="journal article" date="2010" name="Cell Host Microbe">
        <title>Phosphorylation of immunity-related GTPases by a Toxoplasma gondii-secreted kinase promotes macrophage survival and virulence.</title>
        <authorList>
            <person name="Fentress S.J."/>
            <person name="Behnke M.S."/>
            <person name="Dunay I.R."/>
            <person name="Mashayekhi M."/>
            <person name="Rommereim L.M."/>
            <person name="Fox B.A."/>
            <person name="Bzik D.J."/>
            <person name="Taylor G.A."/>
            <person name="Turk B.E."/>
            <person name="Lichti C.F."/>
            <person name="Townsend R.R."/>
            <person name="Qiu W."/>
            <person name="Hui R."/>
            <person name="Beatty W.L."/>
            <person name="Sibley L.D."/>
        </authorList>
    </citation>
    <scope>FUNCTION</scope>
    <scope>INTERACTION WITH TOXOPLASMA ROP18 (MICROBIAL INFECTION)</scope>
    <scope>SUBCELLULAR LOCATION (MICROBIAL INFECTION)</scope>
    <scope>PHOSPHORYLATION AT THR-89 (MICROBIAL INFECTION)</scope>
</reference>
<reference key="12">
    <citation type="journal article" date="2010" name="Cell. Microbiol.">
        <title>Coordinated loading of IRG resistance GTPases on to the Toxoplasma gondii parasitophorous vacuole.</title>
        <authorList>
            <person name="Khaminets A."/>
            <person name="Hunn J.P."/>
            <person name="Koenen-Waisman S."/>
            <person name="Zhao Y.O."/>
            <person name="Preukschat D."/>
            <person name="Coers J."/>
            <person name="Boyle J.P."/>
            <person name="Ong Y.C."/>
            <person name="Boothroyd J.C."/>
            <person name="Reichmann G."/>
            <person name="Howard J.C."/>
        </authorList>
    </citation>
    <scope>FUNCTION</scope>
</reference>
<reference key="13">
    <citation type="journal article" date="2012" name="Funct. Integr. Genomics">
        <title>Comparative genomic analysis of eutherian interferon-gamma-inducible GTPases.</title>
        <authorList>
            <person name="Premzl M."/>
        </authorList>
    </citation>
    <scope>IDENTIFICATION</scope>
    <scope>GENOMIC ANALYSIS</scope>
</reference>
<reference key="14">
    <citation type="journal article" date="2012" name="PLoS Biol.">
        <title>A Toxoplasma gondii pseudokinase inhibits host IRG resistance proteins.</title>
        <authorList>
            <person name="Fleckenstein M.C."/>
            <person name="Reese M.L."/>
            <person name="Koenen-Waisman S."/>
            <person name="Boothroyd J.C."/>
            <person name="Howard J.C."/>
            <person name="Steinfeldt T."/>
        </authorList>
    </citation>
    <scope>FUNCTION</scope>
</reference>
<reference key="15">
    <citation type="journal article" date="2012" name="PLoS Pathog.">
        <title>The rhoptry proteins ROP18 and ROP5 mediate Toxoplasma gondii evasion of the murine, but not the human, interferon-gamma response.</title>
        <authorList>
            <person name="Niedelman W."/>
            <person name="Gold D.A."/>
            <person name="Rosowski E.E."/>
            <person name="Sprokholt J.K."/>
            <person name="Lim D."/>
            <person name="Farid Arenas A."/>
            <person name="Melo M.B."/>
            <person name="Spooner E."/>
            <person name="Yaffe M.B."/>
            <person name="Saeij J.P."/>
        </authorList>
    </citation>
    <scope>SUBCELLULAR LOCATION (MICROBIAL INFECTION)</scope>
</reference>
<reference key="16">
    <citation type="journal article" date="2010" name="Cell">
        <title>A tissue-specific atlas of mouse protein phosphorylation and expression.</title>
        <authorList>
            <person name="Huttlin E.L."/>
            <person name="Jedrychowski M.P."/>
            <person name="Elias J.E."/>
            <person name="Goswami T."/>
            <person name="Rad R."/>
            <person name="Beausoleil S.A."/>
            <person name="Villen J."/>
            <person name="Haas W."/>
            <person name="Sowa M.E."/>
            <person name="Gygi S.P."/>
        </authorList>
    </citation>
    <scope>IDENTIFICATION BY MASS SPECTROMETRY [LARGE SCALE ANALYSIS]</scope>
    <source>
        <tissue>Liver</tissue>
        <tissue>Lung</tissue>
        <tissue>Spleen</tissue>
    </source>
</reference>
<reference key="17">
    <citation type="journal article" date="2013" name="ScientificWorldJournal">
        <title>In astrocytes the accumulation of the immunity-related GTPases Irga6 and Irgb6 at the vacuole of Toxoplasma gondii is dependent on the parasite virulence.</title>
        <authorList>
            <person name="Lubitz F.P."/>
            <person name="Degrandi D."/>
            <person name="Pfeffer K."/>
            <person name="Mausberg A.K."/>
        </authorList>
    </citation>
    <scope>FUNCTION</scope>
    <scope>SUBCELLULAR LOCATION (MICROBIAL INFECTION)</scope>
</reference>
<reference key="18">
    <citation type="journal article" date="2014" name="Cell Host Microbe">
        <title>The Toxoplasma pseudokinase ROP5 forms complexes with ROP18 and ROP17 kinases that synergize to control acute virulence in mice.</title>
        <authorList>
            <person name="Etheridge R.D."/>
            <person name="Alaganan A."/>
            <person name="Tang K."/>
            <person name="Lou H.J."/>
            <person name="Turk B.E."/>
            <person name="Sibley L.D."/>
        </authorList>
    </citation>
    <scope>IDENTIFICATION BY MASS SPECTROMETRY</scope>
    <scope>SUBUNIT</scope>
    <scope>PHOSPHORYLATION AT THR-89 (MICROBIAL INFECTION)</scope>
</reference>
<reference key="19">
    <citation type="journal article" date="2014" name="J. Immunol.">
        <title>Role of mouse and human autophagy proteins in IFN-gamma-induced cell-autonomous responses against Toxoplasma gondii.</title>
        <authorList>
            <person name="Ohshima J."/>
            <person name="Lee Y."/>
            <person name="Sasai M."/>
            <person name="Saitoh T."/>
            <person name="Su Ma J."/>
            <person name="Kamiyama N."/>
            <person name="Matsuura Y."/>
            <person name="Pann-Ghill S."/>
            <person name="Hayashi M."/>
            <person name="Ebisu S."/>
            <person name="Takeda K."/>
            <person name="Akira S."/>
            <person name="Yamamoto M."/>
        </authorList>
    </citation>
    <scope>FUNCTION</scope>
    <scope>INDUCTION BY IFNG</scope>
</reference>
<organism>
    <name type="scientific">Mus musculus</name>
    <name type="common">Mouse</name>
    <dbReference type="NCBI Taxonomy" id="10090"/>
    <lineage>
        <taxon>Eukaryota</taxon>
        <taxon>Metazoa</taxon>
        <taxon>Chordata</taxon>
        <taxon>Craniata</taxon>
        <taxon>Vertebrata</taxon>
        <taxon>Euteleostomi</taxon>
        <taxon>Mammalia</taxon>
        <taxon>Eutheria</taxon>
        <taxon>Euarchontoglires</taxon>
        <taxon>Glires</taxon>
        <taxon>Rodentia</taxon>
        <taxon>Myomorpha</taxon>
        <taxon>Muroidea</taxon>
        <taxon>Muridae</taxon>
        <taxon>Murinae</taxon>
        <taxon>Mus</taxon>
        <taxon>Mus</taxon>
    </lineage>
</organism>
<sequence length="415" mass="47121">MAWASSFDAFFKNFKRESKIISEYDITLIMTYIEENKLQKAVSVIEKVLRDIESAPLHIAVTGETGAGKSTFINTLRGVGHEEKGAAPTGAIETTMKRTPYPHPKLPNVTIWDLPGIGTTNFTPQNYLTEMKFGEYDFFIIISATRFKENDAQLAKAIAQMGMNFYFVRTKIDSDLDNEQKFKPKSFNKEEVLKNIKDYCSNHLQESLDSEPPVFLVSNVDISKYDFPKLETKLLQDLPAHKRHVFSLSLQSLTEATINYKRDSLKQKVFLEAMKAGALATIPLGGMISDILENLDETFNLYRSYFGLDDASLENIAQDLNMSVDDFKVHLRFPHLFAEHNDESLEDKLFKYIKHISSVTGGPVAAVTYYRMAYYLQNLFLDTAANDAIALLNSKALFEKKVGPYISEPPEYWEA</sequence>
<proteinExistence type="evidence at protein level"/>
<name>TGTP1_MOUSE</name>
<accession>Q62293</accession>
<accession>Q60711</accession>
<accession>Q8BN19</accession>
<comment type="function">
    <text evidence="3 5 6 8 9 10 14">Involved in innate cell-autonomous resistance to intracellular pathogens, such as Toxoplasma gondii (PubMed:19265156, PubMed:20109161, PubMed:24563254, PubMed:21147463). During avirulent type II T.gondii infection, recruited to the parasitophorous vacuole (PV) membrane, leading to PV vesiculation and rupture, and subsequent digestion of the parasite within the cytosol (PubMed:19265156, PubMed:24563254, PubMed:24324375, PubMed:22802726, PubMed:21147463). Not recruited to virulent type I T.gondii PV membrane (PubMed:19265156). May confer an antiviral state for vesicular stomatitis virus (PubMed:9725230).</text>
</comment>
<comment type="catalytic activity">
    <reaction evidence="14">
        <text>GTP + H2O = GDP + phosphate + H(+)</text>
        <dbReference type="Rhea" id="RHEA:19669"/>
        <dbReference type="ChEBI" id="CHEBI:15377"/>
        <dbReference type="ChEBI" id="CHEBI:15378"/>
        <dbReference type="ChEBI" id="CHEBI:37565"/>
        <dbReference type="ChEBI" id="CHEBI:43474"/>
        <dbReference type="ChEBI" id="CHEBI:58189"/>
    </reaction>
</comment>
<comment type="subunit">
    <text evidence="11">Monomer, homodimer or homotetramer in the presence of GTP (PubMed:24832449). Forms higher order homooligomers in GTP-dependent manner (PubMed:24832449).</text>
</comment>
<comment type="subunit">
    <text evidence="6">(Microbial infection) Interacts with Toxoplasma gondii ROP18.</text>
</comment>
<comment type="subcellular location">
    <subcellularLocation>
        <location evidence="4">Cytoplasm</location>
    </subcellularLocation>
    <subcellularLocation>
        <location evidence="4">Endoplasmic reticulum</location>
    </subcellularLocation>
    <subcellularLocation>
        <location evidence="4">Golgi apparatus</location>
    </subcellularLocation>
    <text evidence="4 19">In astrocytes stimulated with IFNG or TNF, diffuse cytoplasmic localization decreases and the protein partially relocalizes to the endoplasmic reticulum and Golgi apparatus (PubMed:19285957). Due to sequence similarity with Tgtp2, it is impossible to assign unambiguously experimental data published in the literature to Tgtp1 or Tgtp2 gene (Probable).</text>
</comment>
<comment type="subcellular location">
    <subcellularLocation>
        <location>Parasitophorous vacuole membrane</location>
        <topology evidence="6 7 9">Peripheral membrane protein</topology>
    </subcellularLocation>
    <text>(Microbial infection).</text>
</comment>
<comment type="tissue specificity">
    <text evidence="4 12 13">Expressed in thymus and lymph nodes, predominantly T-cells. Not expressed by immature CD4(+) CD8(+) thymocytes (at protein level) (PubMed:7836757). Expressed in IFNG-stimulated macrophages (PubMed:7884320). Expressed at low levels in unstimulated astrocytes (PubMed:19285957). Due to sequence similarity with Tgtp2, it is impossible to assign unambiguously experimental data published in the literature to Tgtp1 or Tgtp2 gene.</text>
</comment>
<comment type="induction">
    <text evidence="4 10 12 13 14 19">In macrophages, up-regulated by IFNG, but not by IL2, IL4, IL10, nor TNF (PubMed:7884320). Up-regulated by IFNG in lymph node cells and thymocytes and other cell types (PubMed:24563254, PubMed:7836757, PubMed:9725230). In astrocytes, up-regulated by TNF and IFNG; when both cytokines are combined, the effect is synergistic (PubMed:19285957). Due to sequence similarity with Tgtp2, it is impossible to assign unambiguously experimental data published in the literature to Tgtp1 or Tgtp2 gene (Probable).</text>
</comment>
<comment type="PTM">
    <text evidence="6 11">(Microbial infection) Phosphorylated by Toxoplasma gondii ROP17; the phosphorylation leads to disassembly of IRGB6 (TGTP1/TGTP2) polymers into monomers and dimers (PubMed:24832449). Phosphorylated by Toxoplasma gondii ROP18 (PubMed:21147463).</text>
</comment>
<comment type="similarity">
    <text evidence="2 17">Belongs to the TRAFAC class dynamin-like GTPase superfamily. IRG family.</text>
</comment>
<comment type="caution">
    <text evidence="18 19">The gene Tgtp1 belongs to a large family of eutherian IFNG-inducible GTPases, called immunity-related p47 GTPases, which comprises a variable amount of paralogs depending upon the species studied. In C57BL/6J mice, there are over 20 genes, whereas humans have only one ortholog. Tgtp1 closest paralog is Tgtp2. Both genes encode identical proteins. At the nucleotide sequence level, their CDSs differ at only 4 positions. Consequently it is almost impossible to assign unambiguously to one gene or the other experimental data published in the literature.</text>
</comment>
<evidence type="ECO:0000250" key="1">
    <source>
        <dbReference type="UniProtKB" id="Q9QZ85"/>
    </source>
</evidence>
<evidence type="ECO:0000255" key="2">
    <source>
        <dbReference type="PROSITE-ProRule" id="PRU01053"/>
    </source>
</evidence>
<evidence type="ECO:0000269" key="3">
    <source>
    </source>
</evidence>
<evidence type="ECO:0000269" key="4">
    <source>
    </source>
</evidence>
<evidence type="ECO:0000269" key="5">
    <source>
    </source>
</evidence>
<evidence type="ECO:0000269" key="6">
    <source>
    </source>
</evidence>
<evidence type="ECO:0000269" key="7">
    <source>
    </source>
</evidence>
<evidence type="ECO:0000269" key="8">
    <source>
    </source>
</evidence>
<evidence type="ECO:0000269" key="9">
    <source>
    </source>
</evidence>
<evidence type="ECO:0000269" key="10">
    <source>
    </source>
</evidence>
<evidence type="ECO:0000269" key="11">
    <source>
    </source>
</evidence>
<evidence type="ECO:0000269" key="12">
    <source>
    </source>
</evidence>
<evidence type="ECO:0000269" key="13">
    <source>
    </source>
</evidence>
<evidence type="ECO:0000269" key="14">
    <source>
    </source>
</evidence>
<evidence type="ECO:0000303" key="15">
    <source>
    </source>
</evidence>
<evidence type="ECO:0000303" key="16">
    <source>
    </source>
</evidence>
<evidence type="ECO:0000305" key="17"/>
<evidence type="ECO:0000305" key="18">
    <source>
    </source>
</evidence>
<evidence type="ECO:0000305" key="19">
    <source>
    </source>
</evidence>